<proteinExistence type="inferred from homology"/>
<keyword id="KW-0119">Carbohydrate metabolism</keyword>
<keyword id="KW-0963">Cytoplasm</keyword>
<keyword id="KW-0456">Lyase</keyword>
<keyword id="KW-0704">Schiff base</keyword>
<feature type="chain" id="PRO_1000139735" description="N-acetylneuraminate lyase">
    <location>
        <begin position="1"/>
        <end position="297"/>
    </location>
</feature>
<feature type="active site" description="Proton donor" evidence="1">
    <location>
        <position position="137"/>
    </location>
</feature>
<feature type="active site" description="Schiff-base intermediate with substrate" evidence="1">
    <location>
        <position position="165"/>
    </location>
</feature>
<feature type="binding site" evidence="1">
    <location>
        <position position="47"/>
    </location>
    <ligand>
        <name>aceneuramate</name>
        <dbReference type="ChEBI" id="CHEBI:173083"/>
    </ligand>
</feature>
<feature type="binding site" evidence="1">
    <location>
        <position position="48"/>
    </location>
    <ligand>
        <name>aceneuramate</name>
        <dbReference type="ChEBI" id="CHEBI:173083"/>
    </ligand>
</feature>
<feature type="binding site" evidence="1">
    <location>
        <position position="167"/>
    </location>
    <ligand>
        <name>aceneuramate</name>
        <dbReference type="ChEBI" id="CHEBI:173083"/>
    </ligand>
</feature>
<feature type="binding site" evidence="1">
    <location>
        <position position="189"/>
    </location>
    <ligand>
        <name>aceneuramate</name>
        <dbReference type="ChEBI" id="CHEBI:173083"/>
    </ligand>
</feature>
<feature type="binding site" evidence="1">
    <location>
        <position position="191"/>
    </location>
    <ligand>
        <name>aceneuramate</name>
        <dbReference type="ChEBI" id="CHEBI:173083"/>
    </ligand>
</feature>
<feature type="binding site" evidence="1">
    <location>
        <position position="192"/>
    </location>
    <ligand>
        <name>aceneuramate</name>
        <dbReference type="ChEBI" id="CHEBI:173083"/>
    </ligand>
</feature>
<feature type="binding site" evidence="1">
    <location>
        <position position="208"/>
    </location>
    <ligand>
        <name>aceneuramate</name>
        <dbReference type="ChEBI" id="CHEBI:173083"/>
    </ligand>
</feature>
<sequence length="297" mass="32593">MATNLRGVMAALLTPFDQQQALDKASLRRLVQFNIQQGIDGLYVGGSTGEAFVQSLSEREQVLEIVAEEAKGQIKLIAHVGCVSTAESQQLAASAKRYGFDAVSAVTPFYYPFSFEEHCDHYRAIIDSADGLPMVVYNIPALSGVKLTLDQINTLVTLPGVGALKQTSGDLYQMEQIRREHPDLVLYNGYDEIFASGLLAGADGGIGSTYNIMGWRYQGIVKALKEGDIQTAQKLQTECNKVIDLLIKTGVFRGLKTVLHYMDVVSVPLCRKPFGPVDEKYLPELKALAQQLMQERG</sequence>
<evidence type="ECO:0000255" key="1">
    <source>
        <dbReference type="HAMAP-Rule" id="MF_01237"/>
    </source>
</evidence>
<dbReference type="EC" id="4.1.3.3" evidence="1"/>
<dbReference type="EMBL" id="AP009240">
    <property type="protein sequence ID" value="BAG79028.1"/>
    <property type="molecule type" value="Genomic_DNA"/>
</dbReference>
<dbReference type="RefSeq" id="WP_000224721.1">
    <property type="nucleotide sequence ID" value="NC_011415.1"/>
</dbReference>
<dbReference type="SMR" id="B6I1U3"/>
<dbReference type="KEGG" id="ecy:ECSE_3504"/>
<dbReference type="HOGENOM" id="CLU_049343_6_0_6"/>
<dbReference type="UniPathway" id="UPA00629">
    <property type="reaction ID" value="UER00680"/>
</dbReference>
<dbReference type="Proteomes" id="UP000008199">
    <property type="component" value="Chromosome"/>
</dbReference>
<dbReference type="GO" id="GO:0005829">
    <property type="term" value="C:cytosol"/>
    <property type="evidence" value="ECO:0007669"/>
    <property type="project" value="TreeGrafter"/>
</dbReference>
<dbReference type="GO" id="GO:0008747">
    <property type="term" value="F:N-acetylneuraminate lyase activity"/>
    <property type="evidence" value="ECO:0007669"/>
    <property type="project" value="UniProtKB-UniRule"/>
</dbReference>
<dbReference type="GO" id="GO:0005975">
    <property type="term" value="P:carbohydrate metabolic process"/>
    <property type="evidence" value="ECO:0007669"/>
    <property type="project" value="UniProtKB-UniRule"/>
</dbReference>
<dbReference type="GO" id="GO:0019262">
    <property type="term" value="P:N-acetylneuraminate catabolic process"/>
    <property type="evidence" value="ECO:0007669"/>
    <property type="project" value="UniProtKB-UniRule"/>
</dbReference>
<dbReference type="CDD" id="cd00954">
    <property type="entry name" value="NAL"/>
    <property type="match status" value="1"/>
</dbReference>
<dbReference type="FunFam" id="3.20.20.70:FF:000039">
    <property type="entry name" value="N-acetylneuraminate lyase"/>
    <property type="match status" value="1"/>
</dbReference>
<dbReference type="Gene3D" id="3.20.20.70">
    <property type="entry name" value="Aldolase class I"/>
    <property type="match status" value="1"/>
</dbReference>
<dbReference type="HAMAP" id="MF_01237">
    <property type="entry name" value="N_acetylneuram_lyase"/>
    <property type="match status" value="1"/>
</dbReference>
<dbReference type="InterPro" id="IPR013785">
    <property type="entry name" value="Aldolase_TIM"/>
</dbReference>
<dbReference type="InterPro" id="IPR002220">
    <property type="entry name" value="DapA-like"/>
</dbReference>
<dbReference type="InterPro" id="IPR005264">
    <property type="entry name" value="NanA"/>
</dbReference>
<dbReference type="InterPro" id="IPR020625">
    <property type="entry name" value="Schiff_base-form_aldolases_AS"/>
</dbReference>
<dbReference type="InterPro" id="IPR020624">
    <property type="entry name" value="Schiff_base-form_aldolases_CS"/>
</dbReference>
<dbReference type="NCBIfam" id="TIGR00683">
    <property type="entry name" value="nanA"/>
    <property type="match status" value="1"/>
</dbReference>
<dbReference type="NCBIfam" id="NF003164">
    <property type="entry name" value="PRK04147.1"/>
    <property type="match status" value="1"/>
</dbReference>
<dbReference type="PANTHER" id="PTHR42849">
    <property type="entry name" value="N-ACETYLNEURAMINATE LYASE"/>
    <property type="match status" value="1"/>
</dbReference>
<dbReference type="PANTHER" id="PTHR42849:SF1">
    <property type="entry name" value="N-ACETYLNEURAMINATE LYASE"/>
    <property type="match status" value="1"/>
</dbReference>
<dbReference type="Pfam" id="PF00701">
    <property type="entry name" value="DHDPS"/>
    <property type="match status" value="1"/>
</dbReference>
<dbReference type="PIRSF" id="PIRSF001365">
    <property type="entry name" value="DHDPS"/>
    <property type="match status" value="1"/>
</dbReference>
<dbReference type="PRINTS" id="PR00146">
    <property type="entry name" value="DHPICSNTHASE"/>
</dbReference>
<dbReference type="SMART" id="SM01130">
    <property type="entry name" value="DHDPS"/>
    <property type="match status" value="1"/>
</dbReference>
<dbReference type="SUPFAM" id="SSF51569">
    <property type="entry name" value="Aldolase"/>
    <property type="match status" value="1"/>
</dbReference>
<dbReference type="PROSITE" id="PS00665">
    <property type="entry name" value="DHDPS_1"/>
    <property type="match status" value="1"/>
</dbReference>
<dbReference type="PROSITE" id="PS00666">
    <property type="entry name" value="DHDPS_2"/>
    <property type="match status" value="1"/>
</dbReference>
<comment type="function">
    <text evidence="1">Catalyzes the reversible aldol cleavage of N-acetylneuraminic acid (sialic acid; Neu5Ac) to form pyruvate and N-acetylmannosamine (ManNAc) via a Schiff base intermediate.</text>
</comment>
<comment type="catalytic activity">
    <reaction evidence="1">
        <text>aceneuramate = aldehydo-N-acetyl-D-mannosamine + pyruvate</text>
        <dbReference type="Rhea" id="RHEA:23296"/>
        <dbReference type="ChEBI" id="CHEBI:15361"/>
        <dbReference type="ChEBI" id="CHEBI:17122"/>
        <dbReference type="ChEBI" id="CHEBI:173083"/>
        <dbReference type="EC" id="4.1.3.3"/>
    </reaction>
</comment>
<comment type="pathway">
    <text evidence="1">Amino-sugar metabolism; N-acetylneuraminate degradation; D-fructose 6-phosphate from N-acetylneuraminate: step 1/5.</text>
</comment>
<comment type="subunit">
    <text evidence="1">Homotetramer.</text>
</comment>
<comment type="subcellular location">
    <subcellularLocation>
        <location evidence="1">Cytoplasm</location>
    </subcellularLocation>
</comment>
<comment type="similarity">
    <text evidence="1">Belongs to the DapA family. NanA subfamily.</text>
</comment>
<accession>B6I1U3</accession>
<gene>
    <name evidence="1" type="primary">nanA</name>
    <name type="ordered locus">ECSE_3504</name>
</gene>
<reference key="1">
    <citation type="journal article" date="2008" name="DNA Res.">
        <title>Complete genome sequence and comparative analysis of the wild-type commensal Escherichia coli strain SE11 isolated from a healthy adult.</title>
        <authorList>
            <person name="Oshima K."/>
            <person name="Toh H."/>
            <person name="Ogura Y."/>
            <person name="Sasamoto H."/>
            <person name="Morita H."/>
            <person name="Park S.-H."/>
            <person name="Ooka T."/>
            <person name="Iyoda S."/>
            <person name="Taylor T.D."/>
            <person name="Hayashi T."/>
            <person name="Itoh K."/>
            <person name="Hattori M."/>
        </authorList>
    </citation>
    <scope>NUCLEOTIDE SEQUENCE [LARGE SCALE GENOMIC DNA]</scope>
    <source>
        <strain>SE11</strain>
    </source>
</reference>
<protein>
    <recommendedName>
        <fullName evidence="1">N-acetylneuraminate lyase</fullName>
        <shortName evidence="1">NAL</shortName>
        <shortName evidence="1">Neu5Ac lyase</shortName>
        <ecNumber evidence="1">4.1.3.3</ecNumber>
    </recommendedName>
    <alternativeName>
        <fullName evidence="1">N-acetylneuraminate pyruvate-lyase</fullName>
    </alternativeName>
    <alternativeName>
        <fullName evidence="1">N-acetylneuraminic acid aldolase</fullName>
    </alternativeName>
    <alternativeName>
        <fullName evidence="1">Sialate lyase</fullName>
    </alternativeName>
    <alternativeName>
        <fullName evidence="1">Sialic acid aldolase</fullName>
    </alternativeName>
    <alternativeName>
        <fullName evidence="1">Sialic acid lyase</fullName>
    </alternativeName>
</protein>
<name>NANA_ECOSE</name>
<organism>
    <name type="scientific">Escherichia coli (strain SE11)</name>
    <dbReference type="NCBI Taxonomy" id="409438"/>
    <lineage>
        <taxon>Bacteria</taxon>
        <taxon>Pseudomonadati</taxon>
        <taxon>Pseudomonadota</taxon>
        <taxon>Gammaproteobacteria</taxon>
        <taxon>Enterobacterales</taxon>
        <taxon>Enterobacteriaceae</taxon>
        <taxon>Escherichia</taxon>
    </lineage>
</organism>